<feature type="chain" id="PRO_0000428996" description="Hydroxypyruvate reductase">
    <location>
        <begin position="1"/>
        <end position="306"/>
    </location>
</feature>
<feature type="active site" evidence="1">
    <location>
        <position position="230"/>
    </location>
</feature>
<feature type="active site" evidence="1">
    <location>
        <position position="259"/>
    </location>
</feature>
<feature type="active site" description="Proton donor" evidence="1">
    <location>
        <position position="280"/>
    </location>
</feature>
<feature type="binding site" evidence="1">
    <location>
        <begin position="152"/>
        <end position="153"/>
    </location>
    <ligand>
        <name>NAD(+)</name>
        <dbReference type="ChEBI" id="CHEBI:57540"/>
    </ligand>
</feature>
<feature type="binding site" evidence="1">
    <location>
        <position position="172"/>
    </location>
    <ligand>
        <name>NAD(+)</name>
        <dbReference type="ChEBI" id="CHEBI:57540"/>
    </ligand>
</feature>
<feature type="binding site" evidence="1">
    <location>
        <begin position="228"/>
        <end position="230"/>
    </location>
    <ligand>
        <name>NAD(+)</name>
        <dbReference type="ChEBI" id="CHEBI:57540"/>
    </ligand>
</feature>
<feature type="binding site" evidence="1">
    <location>
        <position position="254"/>
    </location>
    <ligand>
        <name>NAD(+)</name>
        <dbReference type="ChEBI" id="CHEBI:57540"/>
    </ligand>
</feature>
<feature type="binding site" evidence="1">
    <location>
        <begin position="280"/>
        <end position="283"/>
    </location>
    <ligand>
        <name>NAD(+)</name>
        <dbReference type="ChEBI" id="CHEBI:57540"/>
    </ligand>
</feature>
<reference key="1">
    <citation type="journal article" date="1999" name="Nature">
        <title>Evidence for lateral gene transfer between Archaea and Bacteria from genome sequence of Thermotoga maritima.</title>
        <authorList>
            <person name="Nelson K.E."/>
            <person name="Clayton R.A."/>
            <person name="Gill S.R."/>
            <person name="Gwinn M.L."/>
            <person name="Dodson R.J."/>
            <person name="Haft D.H."/>
            <person name="Hickey E.K."/>
            <person name="Peterson J.D."/>
            <person name="Nelson W.C."/>
            <person name="Ketchum K.A."/>
            <person name="McDonald L.A."/>
            <person name="Utterback T.R."/>
            <person name="Malek J.A."/>
            <person name="Linher K.D."/>
            <person name="Garrett M.M."/>
            <person name="Stewart A.M."/>
            <person name="Cotton M.D."/>
            <person name="Pratt M.S."/>
            <person name="Phillips C.A."/>
            <person name="Richardson D.L."/>
            <person name="Heidelberg J.F."/>
            <person name="Sutton G.G."/>
            <person name="Fleischmann R.D."/>
            <person name="Eisen J.A."/>
            <person name="White O."/>
            <person name="Salzberg S.L."/>
            <person name="Smith H.O."/>
            <person name="Venter J.C."/>
            <person name="Fraser C.M."/>
        </authorList>
    </citation>
    <scope>NUCLEOTIDE SEQUENCE [LARGE SCALE GENOMIC DNA]</scope>
    <source>
        <strain>ATCC 43589 / DSM 3109 / JCM 10099 / NBRC 100826 / MSB8</strain>
    </source>
</reference>
<reference key="2">
    <citation type="journal article" date="2013" name="PLoS Genet.">
        <title>The genome organization of Thermotoga maritima reflects its lifestyle.</title>
        <authorList>
            <person name="Latif H."/>
            <person name="Lerman J.A."/>
            <person name="Portnoy V.A."/>
            <person name="Tarasova Y."/>
            <person name="Nagarajan H."/>
            <person name="Schrimpe-Rutledge A.C."/>
            <person name="Smith R.D."/>
            <person name="Adkins J.N."/>
            <person name="Lee D.H."/>
            <person name="Qiu Y."/>
            <person name="Zengler K."/>
        </authorList>
    </citation>
    <scope>NUCLEOTIDE SEQUENCE [LARGE SCALE GENOMIC DNA]</scope>
    <source>
        <strain>ATCC 43589 / DSM 3109 / JCM 10099 / NBRC 100826 / MSB8</strain>
    </source>
</reference>
<reference key="3">
    <citation type="submission" date="2013-12" db="EMBL/GenBank/DDBJ databases">
        <authorList>
            <consortium name="DOE Joint Genome Institute"/>
            <person name="Noll K.M."/>
            <person name="Huntemann M."/>
            <person name="Han J."/>
            <person name="Chen A."/>
            <person name="Kyrpides N."/>
            <person name="Mavromatis K."/>
            <person name="Markowitz V."/>
            <person name="Palaniappan K."/>
            <person name="Ivanova N."/>
            <person name="Schaumberg A."/>
            <person name="Pati A."/>
            <person name="Liolios K."/>
            <person name="Nordberg H.P."/>
            <person name="Cantor M.N."/>
            <person name="Hua S.X."/>
            <person name="Woyke T."/>
        </authorList>
    </citation>
    <scope>NUCLEOTIDE SEQUENCE [LARGE SCALE GENOMIC DNA]</scope>
    <source>
        <strain>ATCC 43589 / DSM 3109 / JCM 10099 / NBRC 100826 / MSB8</strain>
    </source>
</reference>
<reference key="4">
    <citation type="journal article" date="2008" name="J. Bacteriol.">
        <title>Glycerate 2-kinase of Thermotoga maritima and genomic reconstruction of related metabolic pathways.</title>
        <authorList>
            <person name="Yang C."/>
            <person name="Rodionov D.A."/>
            <person name="Rodionova I.A."/>
            <person name="Li X."/>
            <person name="Osterman A.L."/>
        </authorList>
    </citation>
    <scope>FUNCTION</scope>
    <scope>CATALYTIC ACTIVITY</scope>
</reference>
<proteinExistence type="evidence at protein level"/>
<gene>
    <name type="ordered locus">TM_1401</name>
    <name type="ORF">THEMA_07310</name>
    <name type="ORF">Tmari_1408</name>
</gene>
<protein>
    <recommendedName>
        <fullName>Hydroxypyruvate reductase</fullName>
        <shortName>HPR</shortName>
        <ecNumber>1.1.1.81</ecNumber>
    </recommendedName>
</protein>
<accession>Q9X1C1</accession>
<accession>G4FFD7</accession>
<comment type="function">
    <text evidence="2">Involved in the degradation of L-serine via 3-hydroxypyruvate. Catalyzes the non-reversible reduction of 3-hydroxypyruvate to yield D-glycerate.</text>
</comment>
<comment type="catalytic activity">
    <reaction evidence="2">
        <text>(R)-glycerate + NAD(+) = 3-hydroxypyruvate + NADH + H(+)</text>
        <dbReference type="Rhea" id="RHEA:17905"/>
        <dbReference type="ChEBI" id="CHEBI:15378"/>
        <dbReference type="ChEBI" id="CHEBI:16659"/>
        <dbReference type="ChEBI" id="CHEBI:17180"/>
        <dbReference type="ChEBI" id="CHEBI:57540"/>
        <dbReference type="ChEBI" id="CHEBI:57945"/>
        <dbReference type="EC" id="1.1.1.81"/>
    </reaction>
</comment>
<comment type="catalytic activity">
    <reaction evidence="2">
        <text>(R)-glycerate + NADP(+) = 3-hydroxypyruvate + NADPH + H(+)</text>
        <dbReference type="Rhea" id="RHEA:18657"/>
        <dbReference type="ChEBI" id="CHEBI:15378"/>
        <dbReference type="ChEBI" id="CHEBI:16659"/>
        <dbReference type="ChEBI" id="CHEBI:17180"/>
        <dbReference type="ChEBI" id="CHEBI:57783"/>
        <dbReference type="ChEBI" id="CHEBI:58349"/>
        <dbReference type="EC" id="1.1.1.81"/>
    </reaction>
</comment>
<comment type="similarity">
    <text evidence="3">Belongs to the D-isomer specific 2-hydroxyacid dehydrogenase family.</text>
</comment>
<organism>
    <name type="scientific">Thermotoga maritima (strain ATCC 43589 / DSM 3109 / JCM 10099 / NBRC 100826 / MSB8)</name>
    <dbReference type="NCBI Taxonomy" id="243274"/>
    <lineage>
        <taxon>Bacteria</taxon>
        <taxon>Thermotogati</taxon>
        <taxon>Thermotogota</taxon>
        <taxon>Thermotogae</taxon>
        <taxon>Thermotogales</taxon>
        <taxon>Thermotogaceae</taxon>
        <taxon>Thermotoga</taxon>
    </lineage>
</organism>
<keyword id="KW-0520">NAD</keyword>
<keyword id="KW-0560">Oxidoreductase</keyword>
<keyword id="KW-1185">Reference proteome</keyword>
<dbReference type="EC" id="1.1.1.81"/>
<dbReference type="EMBL" id="AE000512">
    <property type="protein sequence ID" value="AAD36472.1"/>
    <property type="molecule type" value="Genomic_DNA"/>
</dbReference>
<dbReference type="EMBL" id="CP004077">
    <property type="protein sequence ID" value="AGL50332.1"/>
    <property type="molecule type" value="Genomic_DNA"/>
</dbReference>
<dbReference type="EMBL" id="CP007013">
    <property type="protein sequence ID" value="AHD18703.1"/>
    <property type="molecule type" value="Genomic_DNA"/>
</dbReference>
<dbReference type="PIR" id="B72257">
    <property type="entry name" value="B72257"/>
</dbReference>
<dbReference type="RefSeq" id="NP_229202.1">
    <property type="nucleotide sequence ID" value="NC_000853.1"/>
</dbReference>
<dbReference type="RefSeq" id="WP_004081620.1">
    <property type="nucleotide sequence ID" value="NC_000853.1"/>
</dbReference>
<dbReference type="SMR" id="Q9X1C1"/>
<dbReference type="FunCoup" id="Q9X1C1">
    <property type="interactions" value="271"/>
</dbReference>
<dbReference type="STRING" id="243274.TM_1401"/>
<dbReference type="PaxDb" id="243274-THEMA_07310"/>
<dbReference type="EnsemblBacteria" id="AAD36472">
    <property type="protein sequence ID" value="AAD36472"/>
    <property type="gene ID" value="TM_1401"/>
</dbReference>
<dbReference type="KEGG" id="tma:TM1401"/>
<dbReference type="KEGG" id="tmi:THEMA_07310"/>
<dbReference type="KEGG" id="tmm:Tmari_1408"/>
<dbReference type="KEGG" id="tmw:THMA_1430"/>
<dbReference type="PATRIC" id="fig|243274.17.peg.1408"/>
<dbReference type="eggNOG" id="COG1052">
    <property type="taxonomic scope" value="Bacteria"/>
</dbReference>
<dbReference type="InParanoid" id="Q9X1C1"/>
<dbReference type="OrthoDB" id="9786364at2"/>
<dbReference type="Proteomes" id="UP000008183">
    <property type="component" value="Chromosome"/>
</dbReference>
<dbReference type="GO" id="GO:0008465">
    <property type="term" value="F:hydroxypyruvate reductase (NADH) activity"/>
    <property type="evidence" value="ECO:0007669"/>
    <property type="project" value="RHEA"/>
</dbReference>
<dbReference type="GO" id="GO:0120509">
    <property type="term" value="F:hydroxypyruvate reductase (NADPH) activity"/>
    <property type="evidence" value="ECO:0007669"/>
    <property type="project" value="RHEA"/>
</dbReference>
<dbReference type="GO" id="GO:0051287">
    <property type="term" value="F:NAD binding"/>
    <property type="evidence" value="ECO:0007669"/>
    <property type="project" value="InterPro"/>
</dbReference>
<dbReference type="GO" id="GO:0004617">
    <property type="term" value="F:phosphoglycerate dehydrogenase activity"/>
    <property type="evidence" value="ECO:0000318"/>
    <property type="project" value="GO_Central"/>
</dbReference>
<dbReference type="GO" id="GO:0006564">
    <property type="term" value="P:L-serine biosynthetic process"/>
    <property type="evidence" value="ECO:0000318"/>
    <property type="project" value="GO_Central"/>
</dbReference>
<dbReference type="CDD" id="cd05303">
    <property type="entry name" value="PGDH_2"/>
    <property type="match status" value="1"/>
</dbReference>
<dbReference type="FunFam" id="3.40.50.720:FF:000021">
    <property type="entry name" value="D-3-phosphoglycerate dehydrogenase"/>
    <property type="match status" value="1"/>
</dbReference>
<dbReference type="Gene3D" id="3.40.50.720">
    <property type="entry name" value="NAD(P)-binding Rossmann-like Domain"/>
    <property type="match status" value="2"/>
</dbReference>
<dbReference type="InterPro" id="IPR050857">
    <property type="entry name" value="D-2-hydroxyacid_DH"/>
</dbReference>
<dbReference type="InterPro" id="IPR006139">
    <property type="entry name" value="D-isomer_2_OHA_DH_cat_dom"/>
</dbReference>
<dbReference type="InterPro" id="IPR029753">
    <property type="entry name" value="D-isomer_DH_CS"/>
</dbReference>
<dbReference type="InterPro" id="IPR006140">
    <property type="entry name" value="D-isomer_DH_NAD-bd"/>
</dbReference>
<dbReference type="InterPro" id="IPR036291">
    <property type="entry name" value="NAD(P)-bd_dom_sf"/>
</dbReference>
<dbReference type="PANTHER" id="PTHR42789">
    <property type="entry name" value="D-ISOMER SPECIFIC 2-HYDROXYACID DEHYDROGENASE FAMILY PROTEIN (AFU_ORTHOLOGUE AFUA_6G10090)"/>
    <property type="match status" value="1"/>
</dbReference>
<dbReference type="PANTHER" id="PTHR42789:SF1">
    <property type="entry name" value="D-ISOMER SPECIFIC 2-HYDROXYACID DEHYDROGENASE FAMILY PROTEIN (AFU_ORTHOLOGUE AFUA_6G10090)"/>
    <property type="match status" value="1"/>
</dbReference>
<dbReference type="Pfam" id="PF00389">
    <property type="entry name" value="2-Hacid_dh"/>
    <property type="match status" value="1"/>
</dbReference>
<dbReference type="Pfam" id="PF02826">
    <property type="entry name" value="2-Hacid_dh_C"/>
    <property type="match status" value="1"/>
</dbReference>
<dbReference type="SUPFAM" id="SSF52283">
    <property type="entry name" value="Formate/glycerate dehydrogenase catalytic domain-like"/>
    <property type="match status" value="1"/>
</dbReference>
<dbReference type="SUPFAM" id="SSF51735">
    <property type="entry name" value="NAD(P)-binding Rossmann-fold domains"/>
    <property type="match status" value="1"/>
</dbReference>
<dbReference type="PROSITE" id="PS00670">
    <property type="entry name" value="D_2_HYDROXYACID_DH_2"/>
    <property type="match status" value="1"/>
</dbReference>
<sequence length="306" mass="33451">MARYRVHVNDPLDKEATQLLMNKEELEVTSEHLEKDELMKIIPEVDVLVVRSATKVTADIIEAGKNLKIIARAGIGLDNIDVQKAKEKGIKVLNTPGASAPSVAELAMGLMLACARHIARATVSLKEGKWEKKALKGKELLGKTLGLIGFGNIGQEVAKRALAFGMKIIAYDPAKPETDLPVEYVDLDTLFKESDFISLHVPLTESTRHIINRESIAKMKDGVIIVNTARGGTIDEEALYEEVVSGKVYAAGLDVFEVEPPTDEIRRKLLSLDNVVATPHIGASTAEAQRRVGIELVEKIFKELGI</sequence>
<evidence type="ECO:0000250" key="1"/>
<evidence type="ECO:0000269" key="2">
    <source>
    </source>
</evidence>
<evidence type="ECO:0000305" key="3"/>
<name>HPR_THEMA</name>